<evidence type="ECO:0000255" key="1">
    <source>
        <dbReference type="HAMAP-Rule" id="MF_01371"/>
    </source>
</evidence>
<evidence type="ECO:0000256" key="2">
    <source>
        <dbReference type="SAM" id="MobiDB-lite"/>
    </source>
</evidence>
<evidence type="ECO:0000305" key="3"/>
<dbReference type="EMBL" id="CP000319">
    <property type="protein sequence ID" value="ABE62385.1"/>
    <property type="molecule type" value="Genomic_DNA"/>
</dbReference>
<dbReference type="RefSeq" id="WP_011510071.1">
    <property type="nucleotide sequence ID" value="NC_007964.1"/>
</dbReference>
<dbReference type="SMR" id="Q1QN12"/>
<dbReference type="STRING" id="323097.Nham_1563"/>
<dbReference type="KEGG" id="nha:Nham_1563"/>
<dbReference type="eggNOG" id="COG1841">
    <property type="taxonomic scope" value="Bacteria"/>
</dbReference>
<dbReference type="HOGENOM" id="CLU_131047_1_2_5"/>
<dbReference type="OrthoDB" id="9812790at2"/>
<dbReference type="Proteomes" id="UP000001953">
    <property type="component" value="Chromosome"/>
</dbReference>
<dbReference type="GO" id="GO:0022625">
    <property type="term" value="C:cytosolic large ribosomal subunit"/>
    <property type="evidence" value="ECO:0007669"/>
    <property type="project" value="TreeGrafter"/>
</dbReference>
<dbReference type="GO" id="GO:0003735">
    <property type="term" value="F:structural constituent of ribosome"/>
    <property type="evidence" value="ECO:0007669"/>
    <property type="project" value="InterPro"/>
</dbReference>
<dbReference type="GO" id="GO:0006412">
    <property type="term" value="P:translation"/>
    <property type="evidence" value="ECO:0007669"/>
    <property type="project" value="UniProtKB-UniRule"/>
</dbReference>
<dbReference type="CDD" id="cd01658">
    <property type="entry name" value="Ribosomal_L30"/>
    <property type="match status" value="1"/>
</dbReference>
<dbReference type="Gene3D" id="3.30.1390.20">
    <property type="entry name" value="Ribosomal protein L30, ferredoxin-like fold domain"/>
    <property type="match status" value="1"/>
</dbReference>
<dbReference type="HAMAP" id="MF_01371_B">
    <property type="entry name" value="Ribosomal_uL30_B"/>
    <property type="match status" value="1"/>
</dbReference>
<dbReference type="InterPro" id="IPR036919">
    <property type="entry name" value="Ribo_uL30_ferredoxin-like_sf"/>
</dbReference>
<dbReference type="InterPro" id="IPR005996">
    <property type="entry name" value="Ribosomal_uL30_bac-type"/>
</dbReference>
<dbReference type="InterPro" id="IPR016082">
    <property type="entry name" value="Ribosomal_uL30_ferredoxin-like"/>
</dbReference>
<dbReference type="NCBIfam" id="TIGR01308">
    <property type="entry name" value="rpmD_bact"/>
    <property type="match status" value="1"/>
</dbReference>
<dbReference type="PANTHER" id="PTHR15892:SF2">
    <property type="entry name" value="LARGE RIBOSOMAL SUBUNIT PROTEIN UL30M"/>
    <property type="match status" value="1"/>
</dbReference>
<dbReference type="PANTHER" id="PTHR15892">
    <property type="entry name" value="MITOCHONDRIAL RIBOSOMAL PROTEIN L30"/>
    <property type="match status" value="1"/>
</dbReference>
<dbReference type="Pfam" id="PF00327">
    <property type="entry name" value="Ribosomal_L30"/>
    <property type="match status" value="1"/>
</dbReference>
<dbReference type="PIRSF" id="PIRSF002211">
    <property type="entry name" value="Ribosomal_L30_bac-type"/>
    <property type="match status" value="1"/>
</dbReference>
<dbReference type="SUPFAM" id="SSF55129">
    <property type="entry name" value="Ribosomal protein L30p/L7e"/>
    <property type="match status" value="1"/>
</dbReference>
<feature type="chain" id="PRO_0000273813" description="Large ribosomal subunit protein uL30">
    <location>
        <begin position="1"/>
        <end position="64"/>
    </location>
</feature>
<feature type="region of interest" description="Disordered" evidence="2">
    <location>
        <begin position="1"/>
        <end position="22"/>
    </location>
</feature>
<protein>
    <recommendedName>
        <fullName evidence="1">Large ribosomal subunit protein uL30</fullName>
    </recommendedName>
    <alternativeName>
        <fullName evidence="3">50S ribosomal protein L30</fullName>
    </alternativeName>
</protein>
<keyword id="KW-1185">Reference proteome</keyword>
<keyword id="KW-0687">Ribonucleoprotein</keyword>
<keyword id="KW-0689">Ribosomal protein</keyword>
<reference key="1">
    <citation type="submission" date="2006-03" db="EMBL/GenBank/DDBJ databases">
        <title>Complete sequence of chromosome of Nitrobacter hamburgensis X14.</title>
        <authorList>
            <consortium name="US DOE Joint Genome Institute"/>
            <person name="Copeland A."/>
            <person name="Lucas S."/>
            <person name="Lapidus A."/>
            <person name="Barry K."/>
            <person name="Detter J.C."/>
            <person name="Glavina del Rio T."/>
            <person name="Hammon N."/>
            <person name="Israni S."/>
            <person name="Dalin E."/>
            <person name="Tice H."/>
            <person name="Pitluck S."/>
            <person name="Chain P."/>
            <person name="Malfatti S."/>
            <person name="Shin M."/>
            <person name="Vergez L."/>
            <person name="Schmutz J."/>
            <person name="Larimer F."/>
            <person name="Land M."/>
            <person name="Hauser L."/>
            <person name="Kyrpides N."/>
            <person name="Ivanova N."/>
            <person name="Ward B."/>
            <person name="Arp D."/>
            <person name="Klotz M."/>
            <person name="Stein L."/>
            <person name="O'Mullan G."/>
            <person name="Starkenburg S."/>
            <person name="Sayavedra L."/>
            <person name="Poret-Peterson A.T."/>
            <person name="Gentry M.E."/>
            <person name="Bruce D."/>
            <person name="Richardson P."/>
        </authorList>
    </citation>
    <scope>NUCLEOTIDE SEQUENCE [LARGE SCALE GENOMIC DNA]</scope>
    <source>
        <strain>DSM 10229 / NCIMB 13809 / X14</strain>
    </source>
</reference>
<comment type="subunit">
    <text evidence="1">Part of the 50S ribosomal subunit.</text>
</comment>
<comment type="similarity">
    <text evidence="1">Belongs to the universal ribosomal protein uL30 family.</text>
</comment>
<sequence length="64" mass="7207">MAKAAKTIKVEQTRSAIRRQHSQRSTLVGLKLNKIGRVAELQDTPETRGMIAKVQHLVRVIDET</sequence>
<gene>
    <name evidence="1" type="primary">rpmD</name>
    <name type="ordered locus">Nham_1563</name>
</gene>
<accession>Q1QN12</accession>
<organism>
    <name type="scientific">Nitrobacter hamburgensis (strain DSM 10229 / NCIMB 13809 / X14)</name>
    <dbReference type="NCBI Taxonomy" id="323097"/>
    <lineage>
        <taxon>Bacteria</taxon>
        <taxon>Pseudomonadati</taxon>
        <taxon>Pseudomonadota</taxon>
        <taxon>Alphaproteobacteria</taxon>
        <taxon>Hyphomicrobiales</taxon>
        <taxon>Nitrobacteraceae</taxon>
        <taxon>Nitrobacter</taxon>
    </lineage>
</organism>
<proteinExistence type="inferred from homology"/>
<name>RL30_NITHX</name>